<keyword id="KW-0963">Cytoplasm</keyword>
<keyword id="KW-0238">DNA-binding</keyword>
<keyword id="KW-1185">Reference proteome</keyword>
<keyword id="KW-0731">Sigma factor</keyword>
<keyword id="KW-0346">Stress response</keyword>
<keyword id="KW-0804">Transcription</keyword>
<keyword id="KW-0805">Transcription regulation</keyword>
<accession>P42378</accession>
<name>RPOH_PSEAE</name>
<protein>
    <recommendedName>
        <fullName evidence="1">RNA polymerase sigma factor RpoH</fullName>
    </recommendedName>
    <alternativeName>
        <fullName evidence="1">RNA polymerase sigma-32 factor</fullName>
    </alternativeName>
</protein>
<evidence type="ECO:0000255" key="1">
    <source>
        <dbReference type="HAMAP-Rule" id="MF_00961"/>
    </source>
</evidence>
<evidence type="ECO:0000305" key="2"/>
<dbReference type="EMBL" id="U09560">
    <property type="protein sequence ID" value="AAA92723.1"/>
    <property type="molecule type" value="Genomic_DNA"/>
</dbReference>
<dbReference type="EMBL" id="S77322">
    <property type="protein sequence ID" value="AAB33935.1"/>
    <property type="molecule type" value="Genomic_DNA"/>
</dbReference>
<dbReference type="EMBL" id="D50052">
    <property type="protein sequence ID" value="BAA08769.1"/>
    <property type="molecule type" value="Genomic_DNA"/>
</dbReference>
<dbReference type="EMBL" id="AE004091">
    <property type="protein sequence ID" value="AAG03765.1"/>
    <property type="molecule type" value="Genomic_DNA"/>
</dbReference>
<dbReference type="PIR" id="JC4040">
    <property type="entry name" value="JC4040"/>
</dbReference>
<dbReference type="RefSeq" id="NP_249067.1">
    <property type="nucleotide sequence ID" value="NC_002516.2"/>
</dbReference>
<dbReference type="RefSeq" id="WP_003084510.1">
    <property type="nucleotide sequence ID" value="NZ_QZGE01000016.1"/>
</dbReference>
<dbReference type="SMR" id="P42378"/>
<dbReference type="FunCoup" id="P42378">
    <property type="interactions" value="167"/>
</dbReference>
<dbReference type="STRING" id="208964.PA0376"/>
<dbReference type="PaxDb" id="208964-PA0376"/>
<dbReference type="GeneID" id="77218897"/>
<dbReference type="GeneID" id="883126"/>
<dbReference type="KEGG" id="pae:PA0376"/>
<dbReference type="PATRIC" id="fig|208964.12.peg.396"/>
<dbReference type="PseudoCAP" id="PA0376"/>
<dbReference type="HOGENOM" id="CLU_014793_3_5_6"/>
<dbReference type="InParanoid" id="P42378"/>
<dbReference type="OrthoDB" id="9809557at2"/>
<dbReference type="PhylomeDB" id="P42378"/>
<dbReference type="BioCyc" id="PAER208964:G1FZ6-380-MONOMER"/>
<dbReference type="Proteomes" id="UP000002438">
    <property type="component" value="Chromosome"/>
</dbReference>
<dbReference type="GO" id="GO:0005737">
    <property type="term" value="C:cytoplasm"/>
    <property type="evidence" value="ECO:0007669"/>
    <property type="project" value="UniProtKB-SubCell"/>
</dbReference>
<dbReference type="GO" id="GO:0003677">
    <property type="term" value="F:DNA binding"/>
    <property type="evidence" value="ECO:0007669"/>
    <property type="project" value="UniProtKB-UniRule"/>
</dbReference>
<dbReference type="GO" id="GO:0016987">
    <property type="term" value="F:sigma factor activity"/>
    <property type="evidence" value="ECO:0007669"/>
    <property type="project" value="UniProtKB-UniRule"/>
</dbReference>
<dbReference type="GO" id="GO:0006352">
    <property type="term" value="P:DNA-templated transcription initiation"/>
    <property type="evidence" value="ECO:0007669"/>
    <property type="project" value="UniProtKB-UniRule"/>
</dbReference>
<dbReference type="GO" id="GO:0009408">
    <property type="term" value="P:response to heat"/>
    <property type="evidence" value="ECO:0007669"/>
    <property type="project" value="UniProtKB-UniRule"/>
</dbReference>
<dbReference type="FunFam" id="1.10.10.10:FF:000285">
    <property type="entry name" value="RNA polymerase sigma factor RpoH"/>
    <property type="match status" value="1"/>
</dbReference>
<dbReference type="FunFam" id="1.20.120.1810:FF:000001">
    <property type="entry name" value="RNA polymerase sigma factor RpoH"/>
    <property type="match status" value="1"/>
</dbReference>
<dbReference type="Gene3D" id="1.20.120.1810">
    <property type="match status" value="1"/>
</dbReference>
<dbReference type="Gene3D" id="1.10.10.10">
    <property type="entry name" value="Winged helix-like DNA-binding domain superfamily/Winged helix DNA-binding domain"/>
    <property type="match status" value="1"/>
</dbReference>
<dbReference type="HAMAP" id="MF_00961">
    <property type="entry name" value="Sigma70_RpoH"/>
    <property type="match status" value="1"/>
</dbReference>
<dbReference type="InterPro" id="IPR014284">
    <property type="entry name" value="RNA_pol_sigma-70_dom"/>
</dbReference>
<dbReference type="InterPro" id="IPR000943">
    <property type="entry name" value="RNA_pol_sigma70"/>
</dbReference>
<dbReference type="InterPro" id="IPR009042">
    <property type="entry name" value="RNA_pol_sigma70_r1_2"/>
</dbReference>
<dbReference type="InterPro" id="IPR007627">
    <property type="entry name" value="RNA_pol_sigma70_r2"/>
</dbReference>
<dbReference type="InterPro" id="IPR007630">
    <property type="entry name" value="RNA_pol_sigma70_r4"/>
</dbReference>
<dbReference type="InterPro" id="IPR013325">
    <property type="entry name" value="RNA_pol_sigma_r2"/>
</dbReference>
<dbReference type="InterPro" id="IPR013324">
    <property type="entry name" value="RNA_pol_sigma_r3/r4-like"/>
</dbReference>
<dbReference type="InterPro" id="IPR012759">
    <property type="entry name" value="RNA_pol_sigma_RpoH_proteobac"/>
</dbReference>
<dbReference type="InterPro" id="IPR050813">
    <property type="entry name" value="Sigma-70_Factor"/>
</dbReference>
<dbReference type="InterPro" id="IPR036388">
    <property type="entry name" value="WH-like_DNA-bd_sf"/>
</dbReference>
<dbReference type="NCBIfam" id="NF005143">
    <property type="entry name" value="PRK06596.1"/>
    <property type="match status" value="1"/>
</dbReference>
<dbReference type="NCBIfam" id="TIGR02392">
    <property type="entry name" value="rpoH_proteo"/>
    <property type="match status" value="1"/>
</dbReference>
<dbReference type="NCBIfam" id="TIGR02937">
    <property type="entry name" value="sigma70-ECF"/>
    <property type="match status" value="1"/>
</dbReference>
<dbReference type="PANTHER" id="PTHR30376:SF3">
    <property type="entry name" value="RNA POLYMERASE SIGMA FACTOR RPOH"/>
    <property type="match status" value="1"/>
</dbReference>
<dbReference type="PANTHER" id="PTHR30376">
    <property type="entry name" value="SIGMA FACTOR RPOH HEAT SHOCK RELATED"/>
    <property type="match status" value="1"/>
</dbReference>
<dbReference type="Pfam" id="PF00140">
    <property type="entry name" value="Sigma70_r1_2"/>
    <property type="match status" value="1"/>
</dbReference>
<dbReference type="Pfam" id="PF04542">
    <property type="entry name" value="Sigma70_r2"/>
    <property type="match status" value="1"/>
</dbReference>
<dbReference type="Pfam" id="PF04545">
    <property type="entry name" value="Sigma70_r4"/>
    <property type="match status" value="1"/>
</dbReference>
<dbReference type="PRINTS" id="PR00046">
    <property type="entry name" value="SIGMA70FCT"/>
</dbReference>
<dbReference type="SUPFAM" id="SSF88946">
    <property type="entry name" value="Sigma2 domain of RNA polymerase sigma factors"/>
    <property type="match status" value="1"/>
</dbReference>
<dbReference type="SUPFAM" id="SSF88659">
    <property type="entry name" value="Sigma3 and sigma4 domains of RNA polymerase sigma factors"/>
    <property type="match status" value="1"/>
</dbReference>
<dbReference type="PROSITE" id="PS00715">
    <property type="entry name" value="SIGMA70_1"/>
    <property type="match status" value="1"/>
</dbReference>
<dbReference type="PROSITE" id="PS00716">
    <property type="entry name" value="SIGMA70_2"/>
    <property type="match status" value="1"/>
</dbReference>
<sequence length="284" mass="32581">MTTSLQPVHALVPGANLEAYVHSVNSIPLLSPEQERELAERLFYQQDLEAARQMVLAHLRFVVHIAKSYSGYGLAQADLIQEGNVGLMKAVKRFNPEMGVRLVSFAVHWIKAEIHEFILRNWRIVKVATTKAQRKLFFNLRSQKKRLAWLNNEEVHRVAESLGVEPREVREMESRLTGQDMAFDPAADADDESAYQSPAHYLEDHRYDPARQLEDADWSDSSSANLHEALEGLDERSRDILQQRWLSEEKATLHDLAEKYNVSAERIRQLEKNAMSKLKGRILA</sequence>
<organism>
    <name type="scientific">Pseudomonas aeruginosa (strain ATCC 15692 / DSM 22644 / CIP 104116 / JCM 14847 / LMG 12228 / 1C / PRS 101 / PAO1)</name>
    <dbReference type="NCBI Taxonomy" id="208964"/>
    <lineage>
        <taxon>Bacteria</taxon>
        <taxon>Pseudomonadati</taxon>
        <taxon>Pseudomonadota</taxon>
        <taxon>Gammaproteobacteria</taxon>
        <taxon>Pseudomonadales</taxon>
        <taxon>Pseudomonadaceae</taxon>
        <taxon>Pseudomonas</taxon>
    </lineage>
</organism>
<comment type="function">
    <text evidence="1">Sigma factors are initiation factors that promote the attachment of RNA polymerase to specific initiation sites and are then released. This sigma factor is involved in regulation of expression of heat shock genes.</text>
</comment>
<comment type="subunit">
    <text evidence="1">Interacts with the RNA polymerase core enzyme.</text>
</comment>
<comment type="subcellular location">
    <subcellularLocation>
        <location evidence="1">Cytoplasm</location>
    </subcellularLocation>
</comment>
<comment type="similarity">
    <text evidence="1">Belongs to the sigma-70 factor family. RpoH subfamily.</text>
</comment>
<reference key="1">
    <citation type="journal article" date="1995" name="Can. J. Microbiol.">
        <title>Cloning the gene for the heat shock response positive regulator (sigma 32 homolog) from Pseudomonas aeruginosa.</title>
        <authorList>
            <person name="Naczynski Z.M."/>
            <person name="Mueller C."/>
            <person name="Kropinski A.M."/>
        </authorList>
    </citation>
    <scope>NUCLEOTIDE SEQUENCE [GENOMIC DNA]</scope>
    <source>
        <strain>PAO</strain>
    </source>
</reference>
<reference key="2">
    <citation type="journal article" date="1995" name="Gene">
        <title>Cloning and primary sequence of the rpoH gene from Pseudomonas aeruginosa.</title>
        <authorList>
            <person name="Benvenisti L."/>
            <person name="Koby S."/>
            <person name="Rutman A."/>
            <person name="Giladi H."/>
            <person name="Yura T."/>
            <person name="Oppenheim A.B."/>
        </authorList>
    </citation>
    <scope>NUCLEOTIDE SEQUENCE [GENOMIC DNA]</scope>
    <source>
        <strain>ATCC 15692 / DSM 22644 / CIP 104116 / JCM 14847 / LMG 12228 / 1C / PRS 101 / PAO1</strain>
    </source>
</reference>
<reference key="3">
    <citation type="submission" date="1996-11" db="EMBL/GenBank/DDBJ databases">
        <title>Cloning and sequencing of the gene (rpoH) encoding the heat-shock sigma factor from Pseudomonas aeruginosa.</title>
        <authorList>
            <person name="Aramaki H."/>
            <person name="Fujita M."/>
        </authorList>
    </citation>
    <scope>NUCLEOTIDE SEQUENCE [GENOMIC DNA]</scope>
    <source>
        <strain>ATCC 15692 / DSM 22644 / CIP 104116 / JCM 14847 / LMG 12228 / 1C / PRS 101 / PAO1</strain>
    </source>
</reference>
<reference key="4">
    <citation type="journal article" date="2000" name="Nature">
        <title>Complete genome sequence of Pseudomonas aeruginosa PAO1, an opportunistic pathogen.</title>
        <authorList>
            <person name="Stover C.K."/>
            <person name="Pham X.-Q.T."/>
            <person name="Erwin A.L."/>
            <person name="Mizoguchi S.D."/>
            <person name="Warrener P."/>
            <person name="Hickey M.J."/>
            <person name="Brinkman F.S.L."/>
            <person name="Hufnagle W.O."/>
            <person name="Kowalik D.J."/>
            <person name="Lagrou M."/>
            <person name="Garber R.L."/>
            <person name="Goltry L."/>
            <person name="Tolentino E."/>
            <person name="Westbrock-Wadman S."/>
            <person name="Yuan Y."/>
            <person name="Brody L.L."/>
            <person name="Coulter S.N."/>
            <person name="Folger K.R."/>
            <person name="Kas A."/>
            <person name="Larbig K."/>
            <person name="Lim R.M."/>
            <person name="Smith K.A."/>
            <person name="Spencer D.H."/>
            <person name="Wong G.K.-S."/>
            <person name="Wu Z."/>
            <person name="Paulsen I.T."/>
            <person name="Reizer J."/>
            <person name="Saier M.H. Jr."/>
            <person name="Hancock R.E.W."/>
            <person name="Lory S."/>
            <person name="Olson M.V."/>
        </authorList>
    </citation>
    <scope>NUCLEOTIDE SEQUENCE [LARGE SCALE GENOMIC DNA]</scope>
    <source>
        <strain>ATCC 15692 / DSM 22644 / CIP 104116 / JCM 14847 / LMG 12228 / 1C / PRS 101 / PAO1</strain>
    </source>
</reference>
<proteinExistence type="inferred from homology"/>
<feature type="chain" id="PRO_0000093962" description="RNA polymerase sigma factor RpoH">
    <location>
        <begin position="1"/>
        <end position="284"/>
    </location>
</feature>
<feature type="DNA-binding region" description="H-T-H motif" evidence="1">
    <location>
        <begin position="253"/>
        <end position="272"/>
    </location>
</feature>
<feature type="region of interest" description="Sigma-70 factor domain-2" evidence="1">
    <location>
        <begin position="54"/>
        <end position="123"/>
    </location>
</feature>
<feature type="region of interest" description="Sigma-70 factor domain-4" evidence="1">
    <location>
        <begin position="229"/>
        <end position="280"/>
    </location>
</feature>
<feature type="short sequence motif" description="Interaction with polymerase core subunit RpoC">
    <location>
        <begin position="78"/>
        <end position="81"/>
    </location>
</feature>
<feature type="sequence conflict" description="In Ref. 1; AAA92723." evidence="2" ref="1">
    <original>A</original>
    <variation>G</variation>
    <location>
        <position position="284"/>
    </location>
</feature>
<gene>
    <name evidence="1" type="primary">rpoH</name>
    <name type="ordered locus">PA0376</name>
</gene>